<sequence length="314" mass="35774">MYSQQKQQDIINNLHTIRDYIRWSISEMTANNVYFGHGSESIWDEAVHLVLSAINVAHDIDSNMVGSRLLTEEKKIIIDYVYQRACLRKPLPYILKKAWFAGMEFDIDERVIIPRSPIAELIRNEFSPWINDIDDVTSVLDLCTGSGCIGIACSNVFEDANITLVDISDDALAVANHNIKKHQLSDRVRAIKSDLFDNLHGQKFDLIVSNPPYVDKQDLDTMPHEYHYEPKLALEAGDDGLDLAKRIILEADKYMTENGVLIVEVGNSQYALMEMCPDIPFTWLSFADGGDGVLLLTYDELVKYKDAFKKYFQK</sequence>
<gene>
    <name evidence="1" type="primary">prmB</name>
    <name type="ordered locus">FTT_1617</name>
</gene>
<reference key="1">
    <citation type="journal article" date="2005" name="Nat. Genet.">
        <title>The complete genome sequence of Francisella tularensis, the causative agent of tularemia.</title>
        <authorList>
            <person name="Larsson P."/>
            <person name="Oyston P.C.F."/>
            <person name="Chain P."/>
            <person name="Chu M.C."/>
            <person name="Duffield M."/>
            <person name="Fuxelius H.-H."/>
            <person name="Garcia E."/>
            <person name="Haelltorp G."/>
            <person name="Johansson D."/>
            <person name="Isherwood K.E."/>
            <person name="Karp P.D."/>
            <person name="Larsson E."/>
            <person name="Liu Y."/>
            <person name="Michell S."/>
            <person name="Prior J."/>
            <person name="Prior R."/>
            <person name="Malfatti S."/>
            <person name="Sjoestedt A."/>
            <person name="Svensson K."/>
            <person name="Thompson N."/>
            <person name="Vergez L."/>
            <person name="Wagg J.K."/>
            <person name="Wren B.W."/>
            <person name="Lindler L.E."/>
            <person name="Andersson S.G.E."/>
            <person name="Forsman M."/>
            <person name="Titball R.W."/>
        </authorList>
    </citation>
    <scope>NUCLEOTIDE SEQUENCE [LARGE SCALE GENOMIC DNA]</scope>
    <source>
        <strain>SCHU S4 / Schu 4</strain>
    </source>
</reference>
<feature type="chain" id="PRO_0000414179" description="Ribosomal protein uL3 glutamine methyltransferase">
    <location>
        <begin position="1"/>
        <end position="314"/>
    </location>
</feature>
<name>PRMB_FRATT</name>
<proteinExistence type="inferred from homology"/>
<comment type="function">
    <text evidence="1">Methylates large ribosomal subunit protein uL3 on a specific glutamine residue.</text>
</comment>
<comment type="catalytic activity">
    <reaction evidence="1">
        <text>L-glutaminyl-[ribosomal protein uL3] + S-adenosyl-L-methionine = N(5)-methyl-L-glutaminyl-[ribosomal protein uL3] + S-adenosyl-L-homocysteine + H(+)</text>
        <dbReference type="Rhea" id="RHEA:45020"/>
        <dbReference type="Rhea" id="RHEA-COMP:11063"/>
        <dbReference type="Rhea" id="RHEA-COMP:11064"/>
        <dbReference type="ChEBI" id="CHEBI:15378"/>
        <dbReference type="ChEBI" id="CHEBI:30011"/>
        <dbReference type="ChEBI" id="CHEBI:57856"/>
        <dbReference type="ChEBI" id="CHEBI:59789"/>
        <dbReference type="ChEBI" id="CHEBI:61891"/>
        <dbReference type="EC" id="2.1.1.298"/>
    </reaction>
</comment>
<comment type="similarity">
    <text evidence="1">Belongs to the protein N5-glutamine methyltransferase family. PrmB subfamily.</text>
</comment>
<keyword id="KW-0489">Methyltransferase</keyword>
<keyword id="KW-1185">Reference proteome</keyword>
<keyword id="KW-0949">S-adenosyl-L-methionine</keyword>
<keyword id="KW-0808">Transferase</keyword>
<evidence type="ECO:0000255" key="1">
    <source>
        <dbReference type="HAMAP-Rule" id="MF_02125"/>
    </source>
</evidence>
<accession>Q5NEL0</accession>
<protein>
    <recommendedName>
        <fullName evidence="1">Ribosomal protein uL3 glutamine methyltransferase</fullName>
        <shortName evidence="1">uL3 MTase</shortName>
        <ecNumber evidence="1">2.1.1.298</ecNumber>
    </recommendedName>
    <alternativeName>
        <fullName evidence="1">N5-glutamine methyltransferase PrmB</fullName>
    </alternativeName>
</protein>
<dbReference type="EC" id="2.1.1.298" evidence="1"/>
<dbReference type="EMBL" id="AJ749949">
    <property type="protein sequence ID" value="CAG46250.1"/>
    <property type="molecule type" value="Genomic_DNA"/>
</dbReference>
<dbReference type="RefSeq" id="WP_003022542.1">
    <property type="nucleotide sequence ID" value="NC_006570.2"/>
</dbReference>
<dbReference type="RefSeq" id="YP_170532.1">
    <property type="nucleotide sequence ID" value="NC_006570.2"/>
</dbReference>
<dbReference type="SMR" id="Q5NEL0"/>
<dbReference type="STRING" id="177416.FTT_1617"/>
<dbReference type="DNASU" id="3192421"/>
<dbReference type="EnsemblBacteria" id="CAG46250">
    <property type="protein sequence ID" value="CAG46250"/>
    <property type="gene ID" value="FTT_1617"/>
</dbReference>
<dbReference type="KEGG" id="ftu:FTT_1617"/>
<dbReference type="eggNOG" id="COG2890">
    <property type="taxonomic scope" value="Bacteria"/>
</dbReference>
<dbReference type="OrthoDB" id="9800643at2"/>
<dbReference type="Proteomes" id="UP000001174">
    <property type="component" value="Chromosome"/>
</dbReference>
<dbReference type="GO" id="GO:0005829">
    <property type="term" value="C:cytosol"/>
    <property type="evidence" value="ECO:0007669"/>
    <property type="project" value="TreeGrafter"/>
</dbReference>
<dbReference type="GO" id="GO:0003676">
    <property type="term" value="F:nucleic acid binding"/>
    <property type="evidence" value="ECO:0007669"/>
    <property type="project" value="InterPro"/>
</dbReference>
<dbReference type="GO" id="GO:0036009">
    <property type="term" value="F:protein-glutamine N-methyltransferase activity"/>
    <property type="evidence" value="ECO:0007669"/>
    <property type="project" value="UniProtKB-UniRule"/>
</dbReference>
<dbReference type="GO" id="GO:0032259">
    <property type="term" value="P:methylation"/>
    <property type="evidence" value="ECO:0007669"/>
    <property type="project" value="UniProtKB-KW"/>
</dbReference>
<dbReference type="CDD" id="cd02440">
    <property type="entry name" value="AdoMet_MTases"/>
    <property type="match status" value="1"/>
</dbReference>
<dbReference type="FunFam" id="3.40.50.150:FF:000042">
    <property type="entry name" value="50S ribosomal protein L3 glutamine methyltransferase"/>
    <property type="match status" value="1"/>
</dbReference>
<dbReference type="Gene3D" id="3.40.50.150">
    <property type="entry name" value="Vaccinia Virus protein VP39"/>
    <property type="match status" value="1"/>
</dbReference>
<dbReference type="HAMAP" id="MF_02125">
    <property type="entry name" value="L3_methyltr_PrmB"/>
    <property type="match status" value="1"/>
</dbReference>
<dbReference type="InterPro" id="IPR002052">
    <property type="entry name" value="DNA_methylase_N6_adenine_CS"/>
</dbReference>
<dbReference type="InterPro" id="IPR004556">
    <property type="entry name" value="HemK-like"/>
</dbReference>
<dbReference type="InterPro" id="IPR017127">
    <property type="entry name" value="Ribosome_uL3_MTase"/>
</dbReference>
<dbReference type="InterPro" id="IPR029063">
    <property type="entry name" value="SAM-dependent_MTases_sf"/>
</dbReference>
<dbReference type="InterPro" id="IPR007848">
    <property type="entry name" value="Small_mtfrase_dom"/>
</dbReference>
<dbReference type="NCBIfam" id="TIGR00536">
    <property type="entry name" value="hemK_fam"/>
    <property type="match status" value="1"/>
</dbReference>
<dbReference type="NCBIfam" id="TIGR03533">
    <property type="entry name" value="L3_gln_methyl"/>
    <property type="match status" value="1"/>
</dbReference>
<dbReference type="PANTHER" id="PTHR47806">
    <property type="entry name" value="50S RIBOSOMAL PROTEIN L3 GLUTAMINE METHYLTRANSFERASE"/>
    <property type="match status" value="1"/>
</dbReference>
<dbReference type="PANTHER" id="PTHR47806:SF1">
    <property type="entry name" value="RIBOSOMAL PROTEIN UL3 GLUTAMINE METHYLTRANSFERASE"/>
    <property type="match status" value="1"/>
</dbReference>
<dbReference type="Pfam" id="PF05175">
    <property type="entry name" value="MTS"/>
    <property type="match status" value="1"/>
</dbReference>
<dbReference type="PIRSF" id="PIRSF037167">
    <property type="entry name" value="Mtase_YfcB_prd"/>
    <property type="match status" value="1"/>
</dbReference>
<dbReference type="SUPFAM" id="SSF53335">
    <property type="entry name" value="S-adenosyl-L-methionine-dependent methyltransferases"/>
    <property type="match status" value="1"/>
</dbReference>
<organism>
    <name type="scientific">Francisella tularensis subsp. tularensis (strain SCHU S4 / Schu 4)</name>
    <dbReference type="NCBI Taxonomy" id="177416"/>
    <lineage>
        <taxon>Bacteria</taxon>
        <taxon>Pseudomonadati</taxon>
        <taxon>Pseudomonadota</taxon>
        <taxon>Gammaproteobacteria</taxon>
        <taxon>Thiotrichales</taxon>
        <taxon>Francisellaceae</taxon>
        <taxon>Francisella</taxon>
    </lineage>
</organism>